<organism>
    <name type="scientific">Streptococcus thermophilus (strain ATCC BAA-250 / LMG 18311)</name>
    <dbReference type="NCBI Taxonomy" id="264199"/>
    <lineage>
        <taxon>Bacteria</taxon>
        <taxon>Bacillati</taxon>
        <taxon>Bacillota</taxon>
        <taxon>Bacilli</taxon>
        <taxon>Lactobacillales</taxon>
        <taxon>Streptococcaceae</taxon>
        <taxon>Streptococcus</taxon>
    </lineage>
</organism>
<name>MIAA_STRT2</name>
<comment type="function">
    <text evidence="1">Catalyzes the transfer of a dimethylallyl group onto the adenine at position 37 in tRNAs that read codons beginning with uridine, leading to the formation of N6-(dimethylallyl)adenosine (i(6)A).</text>
</comment>
<comment type="catalytic activity">
    <reaction evidence="1">
        <text>adenosine(37) in tRNA + dimethylallyl diphosphate = N(6)-dimethylallyladenosine(37) in tRNA + diphosphate</text>
        <dbReference type="Rhea" id="RHEA:26482"/>
        <dbReference type="Rhea" id="RHEA-COMP:10162"/>
        <dbReference type="Rhea" id="RHEA-COMP:10375"/>
        <dbReference type="ChEBI" id="CHEBI:33019"/>
        <dbReference type="ChEBI" id="CHEBI:57623"/>
        <dbReference type="ChEBI" id="CHEBI:74411"/>
        <dbReference type="ChEBI" id="CHEBI:74415"/>
        <dbReference type="EC" id="2.5.1.75"/>
    </reaction>
</comment>
<comment type="cofactor">
    <cofactor evidence="1">
        <name>Mg(2+)</name>
        <dbReference type="ChEBI" id="CHEBI:18420"/>
    </cofactor>
</comment>
<comment type="subunit">
    <text evidence="1">Monomer.</text>
</comment>
<comment type="similarity">
    <text evidence="1">Belongs to the IPP transferase family.</text>
</comment>
<comment type="sequence caution" evidence="2">
    <conflict type="erroneous initiation">
        <sequence resource="EMBL-CDS" id="AAV60813"/>
    </conflict>
</comment>
<evidence type="ECO:0000255" key="1">
    <source>
        <dbReference type="HAMAP-Rule" id="MF_00185"/>
    </source>
</evidence>
<evidence type="ECO:0000305" key="2"/>
<dbReference type="EC" id="2.5.1.75" evidence="1"/>
<dbReference type="EMBL" id="CP000023">
    <property type="protein sequence ID" value="AAV60813.1"/>
    <property type="status" value="ALT_INIT"/>
    <property type="molecule type" value="Genomic_DNA"/>
</dbReference>
<dbReference type="RefSeq" id="WP_041828380.1">
    <property type="nucleotide sequence ID" value="NC_006448.1"/>
</dbReference>
<dbReference type="SMR" id="Q5M430"/>
<dbReference type="STRING" id="264199.stu1177"/>
<dbReference type="GeneID" id="66898970"/>
<dbReference type="KEGG" id="stl:stu1177"/>
<dbReference type="PATRIC" id="fig|264199.4.peg.1158"/>
<dbReference type="eggNOG" id="COG0324">
    <property type="taxonomic scope" value="Bacteria"/>
</dbReference>
<dbReference type="HOGENOM" id="CLU_032616_0_1_9"/>
<dbReference type="Proteomes" id="UP000001170">
    <property type="component" value="Chromosome"/>
</dbReference>
<dbReference type="GO" id="GO:0005524">
    <property type="term" value="F:ATP binding"/>
    <property type="evidence" value="ECO:0007669"/>
    <property type="project" value="UniProtKB-UniRule"/>
</dbReference>
<dbReference type="GO" id="GO:0052381">
    <property type="term" value="F:tRNA dimethylallyltransferase activity"/>
    <property type="evidence" value="ECO:0007669"/>
    <property type="project" value="UniProtKB-UniRule"/>
</dbReference>
<dbReference type="GO" id="GO:0006400">
    <property type="term" value="P:tRNA modification"/>
    <property type="evidence" value="ECO:0007669"/>
    <property type="project" value="TreeGrafter"/>
</dbReference>
<dbReference type="Gene3D" id="3.40.50.300">
    <property type="entry name" value="P-loop containing nucleotide triphosphate hydrolases"/>
    <property type="match status" value="1"/>
</dbReference>
<dbReference type="HAMAP" id="MF_00185">
    <property type="entry name" value="IPP_trans"/>
    <property type="match status" value="1"/>
</dbReference>
<dbReference type="InterPro" id="IPR039657">
    <property type="entry name" value="Dimethylallyltransferase"/>
</dbReference>
<dbReference type="InterPro" id="IPR018022">
    <property type="entry name" value="IPT"/>
</dbReference>
<dbReference type="InterPro" id="IPR027417">
    <property type="entry name" value="P-loop_NTPase"/>
</dbReference>
<dbReference type="NCBIfam" id="TIGR00174">
    <property type="entry name" value="miaA"/>
    <property type="match status" value="1"/>
</dbReference>
<dbReference type="PANTHER" id="PTHR11088">
    <property type="entry name" value="TRNA DIMETHYLALLYLTRANSFERASE"/>
    <property type="match status" value="1"/>
</dbReference>
<dbReference type="PANTHER" id="PTHR11088:SF60">
    <property type="entry name" value="TRNA DIMETHYLALLYLTRANSFERASE"/>
    <property type="match status" value="1"/>
</dbReference>
<dbReference type="Pfam" id="PF01715">
    <property type="entry name" value="IPPT"/>
    <property type="match status" value="1"/>
</dbReference>
<dbReference type="SUPFAM" id="SSF52540">
    <property type="entry name" value="P-loop containing nucleoside triphosphate hydrolases"/>
    <property type="match status" value="1"/>
</dbReference>
<accession>Q5M430</accession>
<proteinExistence type="inferred from homology"/>
<sequence>MKTKLIVVAGPTAVGKTALGIELAERFNGEIISGDSQQVYRQLNIGTAKATPEEQAAAVHHLIDVRDVDESYSAYDFVTEAQAAITDIVSRGKLPIIVGGTGLYLQSLLEGYHLGGKVDQNQVLAYRSELEQLSDQQLFEKIDSLGIEIKEINRRRAIRALELYRFSDNLENTETCYEPFIIGLDDERSLIYDRINTRVDKMVELGLLEEAKWLYDNFPEAQSARGIGYKELFPYFSGEQTLDEALEKLKQNTRRFAKRQLTWFRNRMTVSFYQISSPEYPENVIQDLAIFLNEEEGEK</sequence>
<reference key="1">
    <citation type="journal article" date="2004" name="Nat. Biotechnol.">
        <title>Complete sequence and comparative genome analysis of the dairy bacterium Streptococcus thermophilus.</title>
        <authorList>
            <person name="Bolotin A."/>
            <person name="Quinquis B."/>
            <person name="Renault P."/>
            <person name="Sorokin A."/>
            <person name="Ehrlich S.D."/>
            <person name="Kulakauskas S."/>
            <person name="Lapidus A."/>
            <person name="Goltsman E."/>
            <person name="Mazur M."/>
            <person name="Pusch G.D."/>
            <person name="Fonstein M."/>
            <person name="Overbeek R."/>
            <person name="Kyprides N."/>
            <person name="Purnelle B."/>
            <person name="Prozzi D."/>
            <person name="Ngui K."/>
            <person name="Masuy D."/>
            <person name="Hancy F."/>
            <person name="Burteau S."/>
            <person name="Boutry M."/>
            <person name="Delcour J."/>
            <person name="Goffeau A."/>
            <person name="Hols P."/>
        </authorList>
    </citation>
    <scope>NUCLEOTIDE SEQUENCE [LARGE SCALE GENOMIC DNA]</scope>
    <source>
        <strain>ATCC BAA-250 / LMG 18311</strain>
    </source>
</reference>
<protein>
    <recommendedName>
        <fullName evidence="1">tRNA dimethylallyltransferase</fullName>
        <ecNumber evidence="1">2.5.1.75</ecNumber>
    </recommendedName>
    <alternativeName>
        <fullName evidence="1">Dimethylallyl diphosphate:tRNA dimethylallyltransferase</fullName>
        <shortName evidence="1">DMAPP:tRNA dimethylallyltransferase</shortName>
        <shortName evidence="1">DMATase</shortName>
    </alternativeName>
    <alternativeName>
        <fullName evidence="1">Isopentenyl-diphosphate:tRNA isopentenyltransferase</fullName>
        <shortName evidence="1">IPP transferase</shortName>
        <shortName evidence="1">IPPT</shortName>
        <shortName evidence="1">IPTase</shortName>
    </alternativeName>
</protein>
<keyword id="KW-0067">ATP-binding</keyword>
<keyword id="KW-0460">Magnesium</keyword>
<keyword id="KW-0547">Nucleotide-binding</keyword>
<keyword id="KW-1185">Reference proteome</keyword>
<keyword id="KW-0808">Transferase</keyword>
<keyword id="KW-0819">tRNA processing</keyword>
<gene>
    <name evidence="1" type="primary">miaA</name>
    <name type="ordered locus">stu1177</name>
</gene>
<feature type="chain" id="PRO_0000377337" description="tRNA dimethylallyltransferase">
    <location>
        <begin position="1"/>
        <end position="299"/>
    </location>
</feature>
<feature type="region of interest" description="Interaction with substrate tRNA" evidence="1">
    <location>
        <begin position="35"/>
        <end position="38"/>
    </location>
</feature>
<feature type="binding site" evidence="1">
    <location>
        <begin position="10"/>
        <end position="17"/>
    </location>
    <ligand>
        <name>ATP</name>
        <dbReference type="ChEBI" id="CHEBI:30616"/>
    </ligand>
</feature>
<feature type="binding site" evidence="1">
    <location>
        <begin position="12"/>
        <end position="17"/>
    </location>
    <ligand>
        <name>substrate</name>
    </ligand>
</feature>
<feature type="site" description="Interaction with substrate tRNA" evidence="1">
    <location>
        <position position="101"/>
    </location>
</feature>
<feature type="site" description="Interaction with substrate tRNA" evidence="1">
    <location>
        <position position="127"/>
    </location>
</feature>